<sequence>MAPTQAQKVLEAFEDFLKCLDLESYQEKYRPIKTVEQDLPRELNPLPDLYDHYWKPNGNTLHFPDFETFFDQWWEKRLRPLNEFIRKYFWGCSYEFVRLGLEARLYRTAVSIWTQFHFCYRWNASCQLRLTATWELDAQGIDAQIQAEDRLIGIQIKKETYRSEAREGNRFLRRREHSALLEVPYTLQSPEELERKAQRARTREEAYRLWVKIAHHLERLPNGFVIFRESYVKDLENFLKQNATTLSGLIPWDKVAREALTGP</sequence>
<evidence type="ECO:0000303" key="1">
    <source>
    </source>
</evidence>
<evidence type="ECO:0000303" key="2">
    <source>
    </source>
</evidence>
<evidence type="ECO:0000305" key="3"/>
<gene>
    <name type="primary">tthHB8IR</name>
    <name type="ordered locus">TTHA1584</name>
</gene>
<organism>
    <name type="scientific">Thermus thermophilus (strain ATCC 27634 / DSM 579 / HB8)</name>
    <dbReference type="NCBI Taxonomy" id="300852"/>
    <lineage>
        <taxon>Bacteria</taxon>
        <taxon>Thermotogati</taxon>
        <taxon>Deinococcota</taxon>
        <taxon>Deinococci</taxon>
        <taxon>Thermales</taxon>
        <taxon>Thermaceae</taxon>
        <taxon>Thermus</taxon>
    </lineage>
</organism>
<name>T2T8_THET8</name>
<protein>
    <recommendedName>
        <fullName evidence="1">Type II restriction enzyme TthHB8I</fullName>
        <shortName>R.TthHB8I</shortName>
        <ecNumber>3.1.21.4</ecNumber>
    </recommendedName>
    <alternativeName>
        <fullName evidence="2">Endonuclease TthHB8I</fullName>
    </alternativeName>
    <alternativeName>
        <fullName>Type-2 restriction enzyme TthHB8I</fullName>
    </alternativeName>
</protein>
<proteinExistence type="predicted"/>
<reference key="1">
    <citation type="journal article" date="1992" name="Gene">
        <title>Cloning and sequencing of genes encoding the TthHB8I restriction and modification enzymes: comparison with the isoschizomeric TaqI enzymes.</title>
        <authorList>
            <person name="Barany F."/>
            <person name="Danzitz M."/>
            <person name="Zebala J."/>
            <person name="Mayer A."/>
        </authorList>
    </citation>
    <scope>NUCLEOTIDE SEQUENCE [GENOMIC DNA]</scope>
</reference>
<reference key="2">
    <citation type="submission" date="2004-11" db="EMBL/GenBank/DDBJ databases">
        <title>Complete genome sequence of Thermus thermophilus HB8.</title>
        <authorList>
            <person name="Masui R."/>
            <person name="Kurokawa K."/>
            <person name="Nakagawa N."/>
            <person name="Tokunaga F."/>
            <person name="Koyama Y."/>
            <person name="Shibata T."/>
            <person name="Oshima T."/>
            <person name="Yokoyama S."/>
            <person name="Yasunaga T."/>
            <person name="Kuramitsu S."/>
        </authorList>
    </citation>
    <scope>NUCLEOTIDE SEQUENCE [LARGE SCALE GENOMIC DNA]</scope>
    <source>
        <strain>ATCC 27634 / DSM 579 / HB8</strain>
    </source>
</reference>
<reference key="3">
    <citation type="journal article" date="2003" name="Nucleic Acids Res.">
        <title>A nomenclature for restriction enzymes, DNA methyltransferases, homing endonucleases and their genes.</title>
        <authorList>
            <person name="Roberts R.J."/>
            <person name="Belfort M."/>
            <person name="Bestor T."/>
            <person name="Bhagwat A.S."/>
            <person name="Bickle T.A."/>
            <person name="Bitinaite J."/>
            <person name="Blumenthal R.M."/>
            <person name="Degtyarev S.K."/>
            <person name="Dryden D.T."/>
            <person name="Dybvig K."/>
            <person name="Firman K."/>
            <person name="Gromova E.S."/>
            <person name="Gumport R.I."/>
            <person name="Halford S.E."/>
            <person name="Hattman S."/>
            <person name="Heitman J."/>
            <person name="Hornby D.P."/>
            <person name="Janulaitis A."/>
            <person name="Jeltsch A."/>
            <person name="Josephsen J."/>
            <person name="Kiss A."/>
            <person name="Klaenhammer T.R."/>
            <person name="Kobayashi I."/>
            <person name="Kong H."/>
            <person name="Krueger D.H."/>
            <person name="Lacks S."/>
            <person name="Marinus M.G."/>
            <person name="Miyahara M."/>
            <person name="Morgan R.D."/>
            <person name="Murray N.E."/>
            <person name="Nagaraja V."/>
            <person name="Piekarowicz A."/>
            <person name="Pingoud A."/>
            <person name="Raleigh E."/>
            <person name="Rao D.N."/>
            <person name="Reich N."/>
            <person name="Repin V.E."/>
            <person name="Selker E.U."/>
            <person name="Shaw P.C."/>
            <person name="Stein D.C."/>
            <person name="Stoddard B.L."/>
            <person name="Szybalski W."/>
            <person name="Trautner T.A."/>
            <person name="Van Etten J.L."/>
            <person name="Vitor J.M."/>
            <person name="Wilson G.G."/>
            <person name="Xu S.Y."/>
        </authorList>
    </citation>
    <scope>NOMENCLATURE</scope>
    <scope>SUBTYPE</scope>
</reference>
<keyword id="KW-0255">Endonuclease</keyword>
<keyword id="KW-0378">Hydrolase</keyword>
<keyword id="KW-0540">Nuclease</keyword>
<keyword id="KW-1185">Reference proteome</keyword>
<keyword id="KW-0680">Restriction system</keyword>
<comment type="function">
    <text evidence="1">A P subtype restriction enzyme that recognizes the double-stranded sequence 5'-TCGA-3' and cleaves after T-1.</text>
</comment>
<comment type="catalytic activity">
    <reaction>
        <text>Endonucleolytic cleavage of DNA to give specific double-stranded fragments with terminal 5'-phosphates.</text>
        <dbReference type="EC" id="3.1.21.4"/>
    </reaction>
</comment>
<dbReference type="EC" id="3.1.21.4"/>
<dbReference type="EMBL" id="M76680">
    <property type="protein sequence ID" value="AAA27490.1"/>
    <property type="molecule type" value="Genomic_DNA"/>
</dbReference>
<dbReference type="EMBL" id="M74795">
    <property type="protein sequence ID" value="AAA27489.1"/>
    <property type="molecule type" value="Genomic_DNA"/>
</dbReference>
<dbReference type="EMBL" id="AP008226">
    <property type="protein sequence ID" value="BAD71407.1"/>
    <property type="molecule type" value="Genomic_DNA"/>
</dbReference>
<dbReference type="RefSeq" id="YP_144850.1">
    <property type="nucleotide sequence ID" value="NC_006461.1"/>
</dbReference>
<dbReference type="REBASE" id="1831">
    <property type="entry name" value="TthHB8I"/>
</dbReference>
<dbReference type="EnsemblBacteria" id="BAD71407">
    <property type="protein sequence ID" value="BAD71407"/>
    <property type="gene ID" value="BAD71407"/>
</dbReference>
<dbReference type="KEGG" id="ttj:TTHA1584"/>
<dbReference type="eggNOG" id="ENOG5032U4T">
    <property type="taxonomic scope" value="Bacteria"/>
</dbReference>
<dbReference type="HOGENOM" id="CLU_1072404_0_0_0"/>
<dbReference type="PRO" id="PR:P29748"/>
<dbReference type="Proteomes" id="UP000000532">
    <property type="component" value="Chromosome"/>
</dbReference>
<dbReference type="GO" id="GO:0003677">
    <property type="term" value="F:DNA binding"/>
    <property type="evidence" value="ECO:0007669"/>
    <property type="project" value="InterPro"/>
</dbReference>
<dbReference type="GO" id="GO:0009036">
    <property type="term" value="F:type II site-specific deoxyribonuclease activity"/>
    <property type="evidence" value="ECO:0007669"/>
    <property type="project" value="UniProtKB-EC"/>
</dbReference>
<dbReference type="GO" id="GO:0009307">
    <property type="term" value="P:DNA restriction-modification system"/>
    <property type="evidence" value="ECO:0007669"/>
    <property type="project" value="UniProtKB-KW"/>
</dbReference>
<dbReference type="InterPro" id="IPR019073">
    <property type="entry name" value="Restrct_endonuc_II_TaqI"/>
</dbReference>
<dbReference type="Pfam" id="PF09573">
    <property type="entry name" value="RE_TaqI"/>
    <property type="match status" value="1"/>
</dbReference>
<feature type="chain" id="PRO_0000077370" description="Type II restriction enzyme TthHB8I">
    <location>
        <begin position="1"/>
        <end position="263"/>
    </location>
</feature>
<feature type="sequence conflict" description="In Ref. 1; AAA27490/AAA27489." evidence="3" ref="1">
    <original>C</original>
    <variation>S</variation>
    <location>
        <position position="119"/>
    </location>
</feature>
<accession>P29748</accession>
<accession>Q5SHZ6</accession>